<organism>
    <name type="scientific">Salmonella choleraesuis (strain SC-B67)</name>
    <dbReference type="NCBI Taxonomy" id="321314"/>
    <lineage>
        <taxon>Bacteria</taxon>
        <taxon>Pseudomonadati</taxon>
        <taxon>Pseudomonadota</taxon>
        <taxon>Gammaproteobacteria</taxon>
        <taxon>Enterobacterales</taxon>
        <taxon>Enterobacteriaceae</taxon>
        <taxon>Salmonella</taxon>
    </lineage>
</organism>
<dbReference type="EC" id="2.1.1.33" evidence="2"/>
<dbReference type="EMBL" id="AE017220">
    <property type="protein sequence ID" value="AAX66956.1"/>
    <property type="molecule type" value="Genomic_DNA"/>
</dbReference>
<dbReference type="RefSeq" id="WP_000786890.1">
    <property type="nucleotide sequence ID" value="NC_006905.1"/>
</dbReference>
<dbReference type="SMR" id="Q57K06"/>
<dbReference type="KEGG" id="sec:SCH_3050"/>
<dbReference type="HOGENOM" id="CLU_050910_0_1_6"/>
<dbReference type="UniPathway" id="UPA00989"/>
<dbReference type="Proteomes" id="UP000000538">
    <property type="component" value="Chromosome"/>
</dbReference>
<dbReference type="GO" id="GO:0043527">
    <property type="term" value="C:tRNA methyltransferase complex"/>
    <property type="evidence" value="ECO:0007669"/>
    <property type="project" value="TreeGrafter"/>
</dbReference>
<dbReference type="GO" id="GO:0008176">
    <property type="term" value="F:tRNA (guanine(46)-N7)-methyltransferase activity"/>
    <property type="evidence" value="ECO:0007669"/>
    <property type="project" value="UniProtKB-UniRule"/>
</dbReference>
<dbReference type="FunFam" id="3.40.50.150:FF:000024">
    <property type="entry name" value="tRNA (guanine-N(7)-)-methyltransferase"/>
    <property type="match status" value="1"/>
</dbReference>
<dbReference type="Gene3D" id="3.40.50.150">
    <property type="entry name" value="Vaccinia Virus protein VP39"/>
    <property type="match status" value="1"/>
</dbReference>
<dbReference type="HAMAP" id="MF_01057">
    <property type="entry name" value="tRNA_methyltr_TrmB"/>
    <property type="match status" value="1"/>
</dbReference>
<dbReference type="InterPro" id="IPR029063">
    <property type="entry name" value="SAM-dependent_MTases_sf"/>
</dbReference>
<dbReference type="InterPro" id="IPR003358">
    <property type="entry name" value="tRNA_(Gua-N-7)_MeTrfase_Trmb"/>
</dbReference>
<dbReference type="InterPro" id="IPR055361">
    <property type="entry name" value="tRNA_methyltr_TrmB_bact"/>
</dbReference>
<dbReference type="NCBIfam" id="TIGR00091">
    <property type="entry name" value="tRNA (guanosine(46)-N7)-methyltransferase TrmB"/>
    <property type="match status" value="1"/>
</dbReference>
<dbReference type="PANTHER" id="PTHR23417">
    <property type="entry name" value="3-DEOXY-D-MANNO-OCTULOSONIC-ACID TRANSFERASE/TRNA GUANINE-N 7 - -METHYLTRANSFERASE"/>
    <property type="match status" value="1"/>
</dbReference>
<dbReference type="PANTHER" id="PTHR23417:SF14">
    <property type="entry name" value="PENTACOTRIPEPTIDE-REPEAT REGION OF PRORP DOMAIN-CONTAINING PROTEIN"/>
    <property type="match status" value="1"/>
</dbReference>
<dbReference type="Pfam" id="PF02390">
    <property type="entry name" value="Methyltransf_4"/>
    <property type="match status" value="1"/>
</dbReference>
<dbReference type="SUPFAM" id="SSF53335">
    <property type="entry name" value="S-adenosyl-L-methionine-dependent methyltransferases"/>
    <property type="match status" value="1"/>
</dbReference>
<dbReference type="PROSITE" id="PS51625">
    <property type="entry name" value="SAM_MT_TRMB"/>
    <property type="match status" value="1"/>
</dbReference>
<accession>Q57K06</accession>
<sequence>MKNDVISPEFDENGRPLRRIRSFVRRQGRLTKGQEHALENYWPVMGVEFSEAPVDFATLFGREAPVTLEIGFGMGASLVAMAKARPEQNFLGIEVHSPGVGACLASAHEEGVENLRVMCHDAVEVLHKMIPDNSLSMVQLFFPDPWHKARHNKRRIVQVPFAELVLSKLKLGGVFHMATDWEAYAEHMLEVMSSIDGYKNLSESNDYVPRPESRPVTKFEQRGHRLGHGVWDLMFERVK</sequence>
<proteinExistence type="inferred from homology"/>
<name>TRMB_SALCH</name>
<keyword id="KW-0489">Methyltransferase</keyword>
<keyword id="KW-0949">S-adenosyl-L-methionine</keyword>
<keyword id="KW-0808">Transferase</keyword>
<keyword id="KW-0819">tRNA processing</keyword>
<gene>
    <name evidence="2" type="primary">trmB</name>
    <name type="ordered locus">SCH_3050</name>
</gene>
<evidence type="ECO:0000250" key="1"/>
<evidence type="ECO:0000255" key="2">
    <source>
        <dbReference type="HAMAP-Rule" id="MF_01057"/>
    </source>
</evidence>
<feature type="chain" id="PRO_0000229193" description="tRNA (guanine-N(7)-)-methyltransferase">
    <location>
        <begin position="1"/>
        <end position="239"/>
    </location>
</feature>
<feature type="region of interest" description="Interaction with RNA" evidence="2">
    <location>
        <begin position="150"/>
        <end position="155"/>
    </location>
</feature>
<feature type="active site" evidence="1">
    <location>
        <position position="144"/>
    </location>
</feature>
<feature type="binding site" evidence="2">
    <location>
        <position position="69"/>
    </location>
    <ligand>
        <name>S-adenosyl-L-methionine</name>
        <dbReference type="ChEBI" id="CHEBI:59789"/>
    </ligand>
</feature>
<feature type="binding site" evidence="2">
    <location>
        <position position="94"/>
    </location>
    <ligand>
        <name>S-adenosyl-L-methionine</name>
        <dbReference type="ChEBI" id="CHEBI:59789"/>
    </ligand>
</feature>
<feature type="binding site" evidence="2">
    <location>
        <position position="121"/>
    </location>
    <ligand>
        <name>S-adenosyl-L-methionine</name>
        <dbReference type="ChEBI" id="CHEBI:59789"/>
    </ligand>
</feature>
<feature type="binding site" evidence="2">
    <location>
        <position position="144"/>
    </location>
    <ligand>
        <name>S-adenosyl-L-methionine</name>
        <dbReference type="ChEBI" id="CHEBI:59789"/>
    </ligand>
</feature>
<feature type="binding site" evidence="2">
    <location>
        <position position="148"/>
    </location>
    <ligand>
        <name>substrate</name>
    </ligand>
</feature>
<feature type="binding site" evidence="2">
    <location>
        <position position="180"/>
    </location>
    <ligand>
        <name>substrate</name>
    </ligand>
</feature>
<feature type="binding site" evidence="2">
    <location>
        <begin position="217"/>
        <end position="220"/>
    </location>
    <ligand>
        <name>substrate</name>
    </ligand>
</feature>
<reference key="1">
    <citation type="journal article" date="2005" name="Nucleic Acids Res.">
        <title>The genome sequence of Salmonella enterica serovar Choleraesuis, a highly invasive and resistant zoonotic pathogen.</title>
        <authorList>
            <person name="Chiu C.-H."/>
            <person name="Tang P."/>
            <person name="Chu C."/>
            <person name="Hu S."/>
            <person name="Bao Q."/>
            <person name="Yu J."/>
            <person name="Chou Y.-Y."/>
            <person name="Wang H.-S."/>
            <person name="Lee Y.-S."/>
        </authorList>
    </citation>
    <scope>NUCLEOTIDE SEQUENCE [LARGE SCALE GENOMIC DNA]</scope>
    <source>
        <strain>SC-B67</strain>
    </source>
</reference>
<protein>
    <recommendedName>
        <fullName evidence="2">tRNA (guanine-N(7)-)-methyltransferase</fullName>
        <ecNumber evidence="2">2.1.1.33</ecNumber>
    </recommendedName>
    <alternativeName>
        <fullName evidence="2">tRNA (guanine(46)-N(7))-methyltransferase</fullName>
    </alternativeName>
    <alternativeName>
        <fullName evidence="2">tRNA(m7G46)-methyltransferase</fullName>
    </alternativeName>
</protein>
<comment type="function">
    <text evidence="2">Catalyzes the formation of N(7)-methylguanine at position 46 (m7G46) in tRNA.</text>
</comment>
<comment type="catalytic activity">
    <reaction evidence="2">
        <text>guanosine(46) in tRNA + S-adenosyl-L-methionine = N(7)-methylguanosine(46) in tRNA + S-adenosyl-L-homocysteine</text>
        <dbReference type="Rhea" id="RHEA:42708"/>
        <dbReference type="Rhea" id="RHEA-COMP:10188"/>
        <dbReference type="Rhea" id="RHEA-COMP:10189"/>
        <dbReference type="ChEBI" id="CHEBI:57856"/>
        <dbReference type="ChEBI" id="CHEBI:59789"/>
        <dbReference type="ChEBI" id="CHEBI:74269"/>
        <dbReference type="ChEBI" id="CHEBI:74480"/>
        <dbReference type="EC" id="2.1.1.33"/>
    </reaction>
</comment>
<comment type="pathway">
    <text evidence="2">tRNA modification; N(7)-methylguanine-tRNA biosynthesis.</text>
</comment>
<comment type="subunit">
    <text evidence="2">Monomer.</text>
</comment>
<comment type="similarity">
    <text evidence="2">Belongs to the class I-like SAM-binding methyltransferase superfamily. TrmB family.</text>
</comment>